<dbReference type="EC" id="2.7.8.31"/>
<dbReference type="EMBL" id="U38473">
    <property type="protein sequence ID" value="AAC77848.1"/>
    <property type="molecule type" value="Genomic_DNA"/>
</dbReference>
<dbReference type="EMBL" id="U00096">
    <property type="protein sequence ID" value="AAC75108.1"/>
    <property type="molecule type" value="Genomic_DNA"/>
</dbReference>
<dbReference type="EMBL" id="AP009048">
    <property type="protein sequence ID" value="BAA15900.1"/>
    <property type="molecule type" value="Genomic_DNA"/>
</dbReference>
<dbReference type="PIR" id="F64970">
    <property type="entry name" value="F64970"/>
</dbReference>
<dbReference type="RefSeq" id="NP_416551.1">
    <property type="nucleotide sequence ID" value="NC_000913.3"/>
</dbReference>
<dbReference type="RefSeq" id="WP_000183107.1">
    <property type="nucleotide sequence ID" value="NZ_LN832404.1"/>
</dbReference>
<dbReference type="SMR" id="P71241"/>
<dbReference type="BioGRID" id="4263311">
    <property type="interactions" value="198"/>
</dbReference>
<dbReference type="DIP" id="DIP-11125N"/>
<dbReference type="FunCoup" id="P71241">
    <property type="interactions" value="230"/>
</dbReference>
<dbReference type="IntAct" id="P71241">
    <property type="interactions" value="1"/>
</dbReference>
<dbReference type="STRING" id="511145.b2047"/>
<dbReference type="PaxDb" id="511145-b2047"/>
<dbReference type="EnsemblBacteria" id="AAC75108">
    <property type="protein sequence ID" value="AAC75108"/>
    <property type="gene ID" value="b2047"/>
</dbReference>
<dbReference type="GeneID" id="946583"/>
<dbReference type="KEGG" id="ecj:JW2032"/>
<dbReference type="KEGG" id="eco:b2047"/>
<dbReference type="KEGG" id="ecoc:C3026_11525"/>
<dbReference type="PATRIC" id="fig|1411691.4.peg.204"/>
<dbReference type="EchoBASE" id="EB3345"/>
<dbReference type="eggNOG" id="COG2148">
    <property type="taxonomic scope" value="Bacteria"/>
</dbReference>
<dbReference type="HOGENOM" id="CLU_024920_0_1_6"/>
<dbReference type="InParanoid" id="P71241"/>
<dbReference type="OMA" id="YRQERMG"/>
<dbReference type="OrthoDB" id="9808602at2"/>
<dbReference type="PhylomeDB" id="P71241"/>
<dbReference type="BioCyc" id="EcoCyc:G7098-MONOMER"/>
<dbReference type="BioCyc" id="MetaCyc:G7098-MONOMER"/>
<dbReference type="UniPathway" id="UPA00980"/>
<dbReference type="PRO" id="PR:P71241"/>
<dbReference type="Proteomes" id="UP000000625">
    <property type="component" value="Chromosome"/>
</dbReference>
<dbReference type="GO" id="GO:0005886">
    <property type="term" value="C:plasma membrane"/>
    <property type="evidence" value="ECO:0000314"/>
    <property type="project" value="EcoCyc"/>
</dbReference>
<dbReference type="GO" id="GO:0016757">
    <property type="term" value="F:glycosyltransferase activity"/>
    <property type="evidence" value="ECO:0007669"/>
    <property type="project" value="UniProtKB-KW"/>
</dbReference>
<dbReference type="GO" id="GO:0089702">
    <property type="term" value="F:undecaprenyl-phosphate glucose phosphotransferase activity"/>
    <property type="evidence" value="ECO:0000314"/>
    <property type="project" value="EcoCyc"/>
</dbReference>
<dbReference type="GO" id="GO:0009242">
    <property type="term" value="P:colanic acid biosynthetic process"/>
    <property type="evidence" value="ECO:0000315"/>
    <property type="project" value="EcoCyc"/>
</dbReference>
<dbReference type="GO" id="GO:0009103">
    <property type="term" value="P:lipopolysaccharide biosynthetic process"/>
    <property type="evidence" value="ECO:0007669"/>
    <property type="project" value="UniProtKB-KW"/>
</dbReference>
<dbReference type="Gene3D" id="3.40.50.720">
    <property type="entry name" value="NAD(P)-binding Rossmann-like Domain"/>
    <property type="match status" value="1"/>
</dbReference>
<dbReference type="InterPro" id="IPR003362">
    <property type="entry name" value="Bact_transf"/>
</dbReference>
<dbReference type="InterPro" id="IPR017475">
    <property type="entry name" value="EPS_sugar_tfrase"/>
</dbReference>
<dbReference type="InterPro" id="IPR017473">
    <property type="entry name" value="Undecaprenyl-P_gluc_Ptfrase"/>
</dbReference>
<dbReference type="NCBIfam" id="TIGR03025">
    <property type="entry name" value="EPS_sugtrans"/>
    <property type="match status" value="1"/>
</dbReference>
<dbReference type="NCBIfam" id="NF007518">
    <property type="entry name" value="PRK10124.1"/>
    <property type="match status" value="1"/>
</dbReference>
<dbReference type="NCBIfam" id="TIGR03023">
    <property type="entry name" value="WcaJ_sugtrans"/>
    <property type="match status" value="1"/>
</dbReference>
<dbReference type="PANTHER" id="PTHR30576">
    <property type="entry name" value="COLANIC BIOSYNTHESIS UDP-GLUCOSE LIPID CARRIER TRANSFERASE"/>
    <property type="match status" value="1"/>
</dbReference>
<dbReference type="PANTHER" id="PTHR30576:SF21">
    <property type="entry name" value="UDP-GLUCOSE:UNDECAPRENYL-PHOSPHATE GLUCOSE-1-PHOSPHATE TRANSFERASE"/>
    <property type="match status" value="1"/>
</dbReference>
<dbReference type="Pfam" id="PF02397">
    <property type="entry name" value="Bac_transf"/>
    <property type="match status" value="1"/>
</dbReference>
<dbReference type="Pfam" id="PF13727">
    <property type="entry name" value="CoA_binding_3"/>
    <property type="match status" value="1"/>
</dbReference>
<gene>
    <name type="primary">wcaJ</name>
    <name type="ordered locus">b2047</name>
    <name type="ordered locus">JW2032</name>
</gene>
<protein>
    <recommendedName>
        <fullName>UDP-glucose:undecaprenyl-phosphate glucose-1-phosphate transferase</fullName>
        <shortName>UDP-Glc:Und-P Glc-1-P transferase</shortName>
        <ecNumber>2.7.8.31</ecNumber>
    </recommendedName>
    <alternativeName>
        <fullName>Colanic acid biosynthesis UDP-glucose lipid carrier transferase</fullName>
    </alternativeName>
    <alternativeName>
        <fullName>Glucosyl-P-P-undecaprenol synthase</fullName>
    </alternativeName>
</protein>
<proteinExistence type="evidence at protein level"/>
<sequence length="464" mass="52408">MTNLKKRERAKTNASLISMVQRFSDITIMFAGLWLVCEVSGLSFLYMHLLVALITLVVFQMLGGITDFYRSWRGVRAATEFALLLQNWTLSVIFSAGLVAFNNDFDTQLKIWLAWYALTSIGLVVCRSCIRIGAGWLRNHGYNKRMVAVAGDLAAGQMLMESFRNQPWLGFEVVGVYHDPKPGGVSNDWAGNLQQLVEDAKAGKIHNVYIAMQMCDGARVKKLVHQLADTTCSVLLIPDVFTFNILHSRLEEMNGVPVVPLYDTPLSGVNRLLKRAEDIVLATLILLLISPVLCCIALAVKLSSPGPVIFRQTRYGMDGKPIKVWKFRSMKVMENDKVVTQATQNDPRVTKVGNFLRRTSLDELPQFINVLTGGMSIVGPRPHAVAHNEQYRQLIEGYMLRHKVKPGITGWAQINGWRGETDTLEKMEKRVEFDLEYIREWSVWFDIKIVFLTVFKGFVNKAAY</sequence>
<feature type="chain" id="PRO_0000166470" description="UDP-glucose:undecaprenyl-phosphate glucose-1-phosphate transferase">
    <location>
        <begin position="1"/>
        <end position="464"/>
    </location>
</feature>
<feature type="topological domain" description="Cytoplasmic" evidence="1">
    <location>
        <begin position="1"/>
        <end position="15"/>
    </location>
</feature>
<feature type="transmembrane region" description="Helical" evidence="1">
    <location>
        <begin position="16"/>
        <end position="36"/>
    </location>
</feature>
<feature type="topological domain" description="Periplasmic" evidence="1">
    <location>
        <begin position="37"/>
        <end position="38"/>
    </location>
</feature>
<feature type="transmembrane region" description="Helical" evidence="1">
    <location>
        <begin position="39"/>
        <end position="59"/>
    </location>
</feature>
<feature type="topological domain" description="Cytoplasmic" evidence="1">
    <location>
        <begin position="60"/>
        <end position="80"/>
    </location>
</feature>
<feature type="transmembrane region" description="Helical" evidence="1">
    <location>
        <begin position="81"/>
        <end position="101"/>
    </location>
</feature>
<feature type="topological domain" description="Periplasmic" evidence="1">
    <location>
        <begin position="102"/>
        <end position="104"/>
    </location>
</feature>
<feature type="transmembrane region" description="Helical" evidence="1">
    <location>
        <begin position="105"/>
        <end position="125"/>
    </location>
</feature>
<feature type="topological domain" description="Cytoplasmic" evidence="1">
    <location>
        <begin position="126"/>
        <end position="278"/>
    </location>
</feature>
<feature type="transmembrane region" description="Helical" evidence="1">
    <location>
        <begin position="279"/>
        <end position="299"/>
    </location>
</feature>
<feature type="topological domain" description="Periplasmic" evidence="1">
    <location>
        <begin position="300"/>
        <end position="464"/>
    </location>
</feature>
<feature type="sequence conflict" description="In Ref. 1; AAC77848." evidence="3" ref="1">
    <original>AG</original>
    <variation>RA</variation>
    <location>
        <begin position="202"/>
        <end position="203"/>
    </location>
</feature>
<feature type="sequence conflict" description="In Ref. 1; AAC77848." evidence="3" ref="1">
    <original>A</original>
    <variation>P</variation>
    <location>
        <position position="297"/>
    </location>
</feature>
<feature type="sequence conflict" description="In Ref. 1; AAC77848." evidence="3" ref="1">
    <original>Q</original>
    <variation>K</variation>
    <location>
        <position position="312"/>
    </location>
</feature>
<feature type="sequence conflict" description="In Ref. 1; AAC77848." evidence="3" ref="1">
    <original>ML</original>
    <variation>IV</variation>
    <location>
        <begin position="399"/>
        <end position="400"/>
    </location>
</feature>
<accession>P71241</accession>
<accession>P76381</accession>
<name>WCAJ_ECOLI</name>
<evidence type="ECO:0000255" key="1"/>
<evidence type="ECO:0000269" key="2">
    <source>
    </source>
</evidence>
<evidence type="ECO:0000305" key="3"/>
<evidence type="ECO:0000305" key="4">
    <source>
    </source>
</evidence>
<keyword id="KW-0997">Cell inner membrane</keyword>
<keyword id="KW-1003">Cell membrane</keyword>
<keyword id="KW-0270">Exopolysaccharide synthesis</keyword>
<keyword id="KW-0328">Glycosyltransferase</keyword>
<keyword id="KW-0448">Lipopolysaccharide biosynthesis</keyword>
<keyword id="KW-0472">Membrane</keyword>
<keyword id="KW-1185">Reference proteome</keyword>
<keyword id="KW-0808">Transferase</keyword>
<keyword id="KW-0812">Transmembrane</keyword>
<keyword id="KW-1133">Transmembrane helix</keyword>
<organism>
    <name type="scientific">Escherichia coli (strain K12)</name>
    <dbReference type="NCBI Taxonomy" id="83333"/>
    <lineage>
        <taxon>Bacteria</taxon>
        <taxon>Pseudomonadati</taxon>
        <taxon>Pseudomonadota</taxon>
        <taxon>Gammaproteobacteria</taxon>
        <taxon>Enterobacterales</taxon>
        <taxon>Enterobacteriaceae</taxon>
        <taxon>Escherichia</taxon>
    </lineage>
</organism>
<reference key="1">
    <citation type="journal article" date="1996" name="J. Bacteriol.">
        <title>Organization of the Escherichia coli K-12 gene cluster responsible for production of the extracellular polysaccharide colanic acid.</title>
        <authorList>
            <person name="Stevenson G."/>
            <person name="Andrianopoulos K."/>
            <person name="Hobbs M."/>
            <person name="Reeves P.R."/>
        </authorList>
    </citation>
    <scope>NUCLEOTIDE SEQUENCE [GENOMIC DNA]</scope>
    <source>
        <strain>K12</strain>
    </source>
</reference>
<reference key="2">
    <citation type="journal article" date="1996" name="DNA Res.">
        <title>A 460-kb DNA sequence of the Escherichia coli K-12 genome corresponding to the 40.1-50.0 min region on the linkage map.</title>
        <authorList>
            <person name="Itoh T."/>
            <person name="Aiba H."/>
            <person name="Baba T."/>
            <person name="Fujita K."/>
            <person name="Hayashi K."/>
            <person name="Inada T."/>
            <person name="Isono K."/>
            <person name="Kasai H."/>
            <person name="Kimura S."/>
            <person name="Kitakawa M."/>
            <person name="Kitagawa M."/>
            <person name="Makino K."/>
            <person name="Miki T."/>
            <person name="Mizobuchi K."/>
            <person name="Mori H."/>
            <person name="Mori T."/>
            <person name="Motomura K."/>
            <person name="Nakade S."/>
            <person name="Nakamura Y."/>
            <person name="Nashimoto H."/>
            <person name="Nishio Y."/>
            <person name="Oshima T."/>
            <person name="Saito N."/>
            <person name="Sampei G."/>
            <person name="Seki Y."/>
            <person name="Sivasundaram S."/>
            <person name="Tagami H."/>
            <person name="Takeda J."/>
            <person name="Takemoto K."/>
            <person name="Wada C."/>
            <person name="Yamamoto Y."/>
            <person name="Horiuchi T."/>
        </authorList>
    </citation>
    <scope>NUCLEOTIDE SEQUENCE [LARGE SCALE GENOMIC DNA]</scope>
    <source>
        <strain>K12 / W3110 / ATCC 27325 / DSM 5911</strain>
    </source>
</reference>
<reference key="3">
    <citation type="journal article" date="1997" name="Science">
        <title>The complete genome sequence of Escherichia coli K-12.</title>
        <authorList>
            <person name="Blattner F.R."/>
            <person name="Plunkett G. III"/>
            <person name="Bloch C.A."/>
            <person name="Perna N.T."/>
            <person name="Burland V."/>
            <person name="Riley M."/>
            <person name="Collado-Vides J."/>
            <person name="Glasner J.D."/>
            <person name="Rode C.K."/>
            <person name="Mayhew G.F."/>
            <person name="Gregor J."/>
            <person name="Davis N.W."/>
            <person name="Kirkpatrick H.A."/>
            <person name="Goeden M.A."/>
            <person name="Rose D.J."/>
            <person name="Mau B."/>
            <person name="Shao Y."/>
        </authorList>
    </citation>
    <scope>NUCLEOTIDE SEQUENCE [LARGE SCALE GENOMIC DNA]</scope>
    <source>
        <strain>K12 / MG1655 / ATCC 47076</strain>
    </source>
</reference>
<reference key="4">
    <citation type="journal article" date="2006" name="Mol. Syst. Biol.">
        <title>Highly accurate genome sequences of Escherichia coli K-12 strains MG1655 and W3110.</title>
        <authorList>
            <person name="Hayashi K."/>
            <person name="Morooka N."/>
            <person name="Yamamoto Y."/>
            <person name="Fujita K."/>
            <person name="Isono K."/>
            <person name="Choi S."/>
            <person name="Ohtsubo E."/>
            <person name="Baba T."/>
            <person name="Wanner B.L."/>
            <person name="Mori H."/>
            <person name="Horiuchi T."/>
        </authorList>
    </citation>
    <scope>NUCLEOTIDE SEQUENCE [LARGE SCALE GENOMIC DNA]</scope>
    <source>
        <strain>K12 / W3110 / ATCC 27325 / DSM 5911</strain>
    </source>
</reference>
<reference key="5">
    <citation type="journal article" date="2005" name="Science">
        <title>Global topology analysis of the Escherichia coli inner membrane proteome.</title>
        <authorList>
            <person name="Daley D.O."/>
            <person name="Rapp M."/>
            <person name="Granseth E."/>
            <person name="Melen K."/>
            <person name="Drew D."/>
            <person name="von Heijne G."/>
        </authorList>
    </citation>
    <scope>TOPOLOGY [LARGE SCALE ANALYSIS]</scope>
    <source>
        <strain>K12 / MG1655 / ATCC 47076</strain>
    </source>
</reference>
<reference key="6">
    <citation type="journal article" date="2012" name="J. Bacteriol.">
        <title>Functional characterization of UDP-glucose:undecaprenyl-phosphate glucose-1-phosphate transferases of Escherichia coli and Caulobacter crescentus.</title>
        <authorList>
            <person name="Patel K.B."/>
            <person name="Toh E."/>
            <person name="Fernandez X.B."/>
            <person name="Hanuszkiewicz A."/>
            <person name="Hardy G.G."/>
            <person name="Brun Y.V."/>
            <person name="Bernards M.A."/>
            <person name="Valvano M.A."/>
        </authorList>
    </citation>
    <scope>FUNCTION</scope>
    <scope>CATALYTIC ACTIVITY</scope>
    <scope>ROLE IN COLANIC ACID BIOSYNTHESIS</scope>
    <scope>PATHWAY</scope>
    <scope>SUBSTRATE SPECIFICITY</scope>
    <scope>DISRUPTION PHENOTYPE</scope>
    <scope>SUBCELLULAR LOCATION</scope>
    <source>
        <strain>K12 / W3110 / ATCC 27325 / DSM 5911</strain>
    </source>
</reference>
<comment type="function">
    <text evidence="2">Is the initiating enzyme for colanic acid (CA) synthesis. Catalyzes the transfer of the glucose-1-phosphate moiety from UDP-Glc onto the carrier lipid undecaprenyl phosphate (C55-P), forming a phosphoanhydride bond yielding to glucosyl-pyrophosphoryl-undecaprenol (Glc-PP-C55). Also possesses a weak galactose-1-P transferase activity.</text>
</comment>
<comment type="catalytic activity">
    <reaction evidence="2">
        <text>di-trans,octa-cis-undecaprenyl phosphate + UDP-alpha-D-glucose = alpha-D-glucosyl di-trans,octa-cis-undecaprenyl diphosphate + UMP</text>
        <dbReference type="Rhea" id="RHEA:28126"/>
        <dbReference type="ChEBI" id="CHEBI:57865"/>
        <dbReference type="ChEBI" id="CHEBI:58885"/>
        <dbReference type="ChEBI" id="CHEBI:60392"/>
        <dbReference type="ChEBI" id="CHEBI:61254"/>
        <dbReference type="EC" id="2.7.8.31"/>
    </reaction>
</comment>
<comment type="pathway">
    <text evidence="2">Exopolysaccharide biosynthesis; colanic acid biosynthesis.</text>
</comment>
<comment type="subcellular location">
    <subcellularLocation>
        <location evidence="2">Cell inner membrane</location>
        <topology evidence="2">Multi-pass membrane protein</topology>
    </subcellularLocation>
</comment>
<comment type="disruption phenotype">
    <text evidence="2">Cells lacking this gene show a non-mucoid phenotype.</text>
</comment>
<comment type="miscellaneous">
    <text evidence="4">Complements holdfast synthesis in the C.crescentus mutant lacking hfsE, pssY and pssZ genes. Can also partially complement the O-antigen defect in the S.typhimurium wbaP deletion strain (PubMed:22408159).</text>
</comment>
<comment type="similarity">
    <text evidence="3">Belongs to the bacterial sugar transferase family.</text>
</comment>